<comment type="similarity">
    <text evidence="1">Belongs to the eukaryotic ribosomal protein eS28 family.</text>
</comment>
<feature type="chain" id="PRO_0000136836" description="Small ribosomal subunit protein eS28">
    <location>
        <begin position="1"/>
        <end position="67"/>
    </location>
</feature>
<gene>
    <name type="primary">RPS28A</name>
    <name type="ordered locus">AGR261W</name>
</gene>
<sequence length="67" mass="7551">MDSKTPVTLAKVIKVLGRTGSRGGVTQVRVEFLDDTSRTIVRNVKGPVRENDILVLMESEREARRLR</sequence>
<organism>
    <name type="scientific">Eremothecium gossypii (strain ATCC 10895 / CBS 109.51 / FGSC 9923 / NRRL Y-1056)</name>
    <name type="common">Yeast</name>
    <name type="synonym">Ashbya gossypii</name>
    <dbReference type="NCBI Taxonomy" id="284811"/>
    <lineage>
        <taxon>Eukaryota</taxon>
        <taxon>Fungi</taxon>
        <taxon>Dikarya</taxon>
        <taxon>Ascomycota</taxon>
        <taxon>Saccharomycotina</taxon>
        <taxon>Saccharomycetes</taxon>
        <taxon>Saccharomycetales</taxon>
        <taxon>Saccharomycetaceae</taxon>
        <taxon>Eremothecium</taxon>
    </lineage>
</organism>
<keyword id="KW-1185">Reference proteome</keyword>
<keyword id="KW-0687">Ribonucleoprotein</keyword>
<keyword id="KW-0689">Ribosomal protein</keyword>
<reference key="1">
    <citation type="journal article" date="2004" name="Science">
        <title>The Ashbya gossypii genome as a tool for mapping the ancient Saccharomyces cerevisiae genome.</title>
        <authorList>
            <person name="Dietrich F.S."/>
            <person name="Voegeli S."/>
            <person name="Brachat S."/>
            <person name="Lerch A."/>
            <person name="Gates K."/>
            <person name="Steiner S."/>
            <person name="Mohr C."/>
            <person name="Poehlmann R."/>
            <person name="Luedi P."/>
            <person name="Choi S."/>
            <person name="Wing R.A."/>
            <person name="Flavier A."/>
            <person name="Gaffney T.D."/>
            <person name="Philippsen P."/>
        </authorList>
    </citation>
    <scope>NUCLEOTIDE SEQUENCE [LARGE SCALE GENOMIC DNA]</scope>
    <source>
        <strain>ATCC 10895 / CBS 109.51 / FGSC 9923 / NRRL Y-1056</strain>
    </source>
</reference>
<reference key="2">
    <citation type="journal article" date="2013" name="G3 (Bethesda)">
        <title>Genomes of Ashbya fungi isolated from insects reveal four mating-type loci, numerous translocations, lack of transposons, and distinct gene duplications.</title>
        <authorList>
            <person name="Dietrich F.S."/>
            <person name="Voegeli S."/>
            <person name="Kuo S."/>
            <person name="Philippsen P."/>
        </authorList>
    </citation>
    <scope>GENOME REANNOTATION</scope>
    <source>
        <strain>ATCC 10895 / CBS 109.51 / FGSC 9923 / NRRL Y-1056</strain>
    </source>
</reference>
<dbReference type="EMBL" id="AE016820">
    <property type="protein sequence ID" value="AAS54751.1"/>
    <property type="molecule type" value="Genomic_DNA"/>
</dbReference>
<dbReference type="RefSeq" id="NP_986927.1">
    <property type="nucleotide sequence ID" value="NM_211989.1"/>
</dbReference>
<dbReference type="SMR" id="Q74ZD8"/>
<dbReference type="FunCoup" id="Q74ZD8">
    <property type="interactions" value="867"/>
</dbReference>
<dbReference type="STRING" id="284811.Q74ZD8"/>
<dbReference type="EnsemblFungi" id="AAS54751">
    <property type="protein sequence ID" value="AAS54751"/>
    <property type="gene ID" value="AGOS_AGR261W"/>
</dbReference>
<dbReference type="GeneID" id="4623229"/>
<dbReference type="KEGG" id="ago:AGOS_AGR261W"/>
<dbReference type="eggNOG" id="KOG3502">
    <property type="taxonomic scope" value="Eukaryota"/>
</dbReference>
<dbReference type="HOGENOM" id="CLU_178987_1_0_1"/>
<dbReference type="InParanoid" id="Q74ZD8"/>
<dbReference type="OMA" id="NTGMHGE"/>
<dbReference type="OrthoDB" id="10258930at2759"/>
<dbReference type="Proteomes" id="UP000000591">
    <property type="component" value="Chromosome VII"/>
</dbReference>
<dbReference type="GO" id="GO:0022627">
    <property type="term" value="C:cytosolic small ribosomal subunit"/>
    <property type="evidence" value="ECO:0000318"/>
    <property type="project" value="GO_Central"/>
</dbReference>
<dbReference type="GO" id="GO:0003735">
    <property type="term" value="F:structural constituent of ribosome"/>
    <property type="evidence" value="ECO:0000318"/>
    <property type="project" value="GO_Central"/>
</dbReference>
<dbReference type="GO" id="GO:0030490">
    <property type="term" value="P:maturation of SSU-rRNA"/>
    <property type="evidence" value="ECO:0000318"/>
    <property type="project" value="GO_Central"/>
</dbReference>
<dbReference type="GO" id="GO:0000028">
    <property type="term" value="P:ribosomal small subunit assembly"/>
    <property type="evidence" value="ECO:0000318"/>
    <property type="project" value="GO_Central"/>
</dbReference>
<dbReference type="GO" id="GO:0006412">
    <property type="term" value="P:translation"/>
    <property type="evidence" value="ECO:0007669"/>
    <property type="project" value="InterPro"/>
</dbReference>
<dbReference type="CDD" id="cd04457">
    <property type="entry name" value="S1_S28E"/>
    <property type="match status" value="1"/>
</dbReference>
<dbReference type="FunFam" id="2.40.50.140:FF:000025">
    <property type="entry name" value="40S ribosomal protein S28"/>
    <property type="match status" value="1"/>
</dbReference>
<dbReference type="Gene3D" id="2.40.50.140">
    <property type="entry name" value="Nucleic acid-binding proteins"/>
    <property type="match status" value="1"/>
</dbReference>
<dbReference type="HAMAP" id="MF_00292">
    <property type="entry name" value="Ribosomal_eS28"/>
    <property type="match status" value="1"/>
</dbReference>
<dbReference type="InterPro" id="IPR012340">
    <property type="entry name" value="NA-bd_OB-fold"/>
</dbReference>
<dbReference type="InterPro" id="IPR000289">
    <property type="entry name" value="Ribosomal_eS28"/>
</dbReference>
<dbReference type="InterPro" id="IPR028626">
    <property type="entry name" value="Ribosomal_eS28_CS"/>
</dbReference>
<dbReference type="PANTHER" id="PTHR10769">
    <property type="entry name" value="40S RIBOSOMAL PROTEIN S28"/>
    <property type="match status" value="1"/>
</dbReference>
<dbReference type="PANTHER" id="PTHR10769:SF3">
    <property type="entry name" value="SMALL RIBOSOMAL SUBUNIT PROTEIN ES28"/>
    <property type="match status" value="1"/>
</dbReference>
<dbReference type="Pfam" id="PF01200">
    <property type="entry name" value="Ribosomal_S28e"/>
    <property type="match status" value="1"/>
</dbReference>
<dbReference type="SUPFAM" id="SSF50249">
    <property type="entry name" value="Nucleic acid-binding proteins"/>
    <property type="match status" value="1"/>
</dbReference>
<dbReference type="PROSITE" id="PS00961">
    <property type="entry name" value="RIBOSOMAL_S28E"/>
    <property type="match status" value="1"/>
</dbReference>
<name>RS28_EREGS</name>
<protein>
    <recommendedName>
        <fullName evidence="1">Small ribosomal subunit protein eS28</fullName>
    </recommendedName>
    <alternativeName>
        <fullName>40S ribosomal protein S28</fullName>
    </alternativeName>
</protein>
<proteinExistence type="inferred from homology"/>
<evidence type="ECO:0000305" key="1"/>
<accession>Q74ZD8</accession>